<reference key="1">
    <citation type="journal article" date="2004" name="Mol. Biol. Evol.">
        <title>The chloroplast genome of Nymphaea alba: whole-genome analyses and the problem of identifying the most basal angiosperm.</title>
        <authorList>
            <person name="Goremykin V.V."/>
            <person name="Hirsch-Ernst K.I."/>
            <person name="Woelfl S."/>
            <person name="Hellwig F.H."/>
        </authorList>
    </citation>
    <scope>NUCLEOTIDE SEQUENCE [LARGE SCALE GENOMIC DNA]</scope>
</reference>
<accession>Q6EW62</accession>
<protein>
    <recommendedName>
        <fullName evidence="1">ATP synthase subunit b, chloroplastic</fullName>
    </recommendedName>
    <alternativeName>
        <fullName evidence="1">ATP synthase F(0) sector subunit b</fullName>
    </alternativeName>
    <alternativeName>
        <fullName evidence="1">ATPase subunit I</fullName>
    </alternativeName>
</protein>
<name>ATPF_NYMAL</name>
<proteinExistence type="inferred from homology"/>
<comment type="function">
    <text evidence="1">F(1)F(0) ATP synthase produces ATP from ADP in the presence of a proton or sodium gradient. F-type ATPases consist of two structural domains, F(1) containing the extramembraneous catalytic core and F(0) containing the membrane proton channel, linked together by a central stalk and a peripheral stalk. During catalysis, ATP synthesis in the catalytic domain of F(1) is coupled via a rotary mechanism of the central stalk subunits to proton translocation.</text>
</comment>
<comment type="function">
    <text evidence="1">Component of the F(0) channel, it forms part of the peripheral stalk, linking F(1) to F(0).</text>
</comment>
<comment type="subunit">
    <text evidence="1">F-type ATPases have 2 components, F(1) - the catalytic core - and F(0) - the membrane proton channel. F(1) has five subunits: alpha(3), beta(3), gamma(1), delta(1), epsilon(1). F(0) has four main subunits: a(1), b(1), b'(1) and c(10-14). The alpha and beta chains form an alternating ring which encloses part of the gamma chain. F(1) is attached to F(0) by a central stalk formed by the gamma and epsilon chains, while a peripheral stalk is formed by the delta, b and b' chains.</text>
</comment>
<comment type="subcellular location">
    <subcellularLocation>
        <location evidence="1">Plastid</location>
        <location evidence="1">Chloroplast thylakoid membrane</location>
        <topology evidence="1">Single-pass membrane protein</topology>
    </subcellularLocation>
</comment>
<comment type="miscellaneous">
    <text>In plastids the F-type ATPase is also known as CF(1)CF(0).</text>
</comment>
<comment type="similarity">
    <text evidence="1">Belongs to the ATPase B chain family.</text>
</comment>
<geneLocation type="chloroplast"/>
<keyword id="KW-0066">ATP synthesis</keyword>
<keyword id="KW-0138">CF(0)</keyword>
<keyword id="KW-0150">Chloroplast</keyword>
<keyword id="KW-0375">Hydrogen ion transport</keyword>
<keyword id="KW-0406">Ion transport</keyword>
<keyword id="KW-0472">Membrane</keyword>
<keyword id="KW-0934">Plastid</keyword>
<keyword id="KW-0793">Thylakoid</keyword>
<keyword id="KW-0812">Transmembrane</keyword>
<keyword id="KW-1133">Transmembrane helix</keyword>
<keyword id="KW-0813">Transport</keyword>
<dbReference type="EMBL" id="AJ627251">
    <property type="protein sequence ID" value="CAF28579.1"/>
    <property type="molecule type" value="Genomic_DNA"/>
</dbReference>
<dbReference type="RefSeq" id="YP_053141.1">
    <property type="nucleotide sequence ID" value="NC_006050.1"/>
</dbReference>
<dbReference type="SMR" id="Q6EW62"/>
<dbReference type="GeneID" id="2896265"/>
<dbReference type="GO" id="GO:0009535">
    <property type="term" value="C:chloroplast thylakoid membrane"/>
    <property type="evidence" value="ECO:0007669"/>
    <property type="project" value="UniProtKB-SubCell"/>
</dbReference>
<dbReference type="GO" id="GO:0045259">
    <property type="term" value="C:proton-transporting ATP synthase complex"/>
    <property type="evidence" value="ECO:0007669"/>
    <property type="project" value="UniProtKB-KW"/>
</dbReference>
<dbReference type="GO" id="GO:0046933">
    <property type="term" value="F:proton-transporting ATP synthase activity, rotational mechanism"/>
    <property type="evidence" value="ECO:0007669"/>
    <property type="project" value="UniProtKB-UniRule"/>
</dbReference>
<dbReference type="CDD" id="cd06503">
    <property type="entry name" value="ATP-synt_Fo_b"/>
    <property type="match status" value="1"/>
</dbReference>
<dbReference type="HAMAP" id="MF_01398">
    <property type="entry name" value="ATP_synth_b_bprime"/>
    <property type="match status" value="1"/>
</dbReference>
<dbReference type="InterPro" id="IPR002146">
    <property type="entry name" value="ATP_synth_b/b'su_bac/chlpt"/>
</dbReference>
<dbReference type="PANTHER" id="PTHR34264">
    <property type="entry name" value="ATP SYNTHASE SUBUNIT B, CHLOROPLASTIC"/>
    <property type="match status" value="1"/>
</dbReference>
<dbReference type="PANTHER" id="PTHR34264:SF3">
    <property type="entry name" value="ATP SYNTHASE SUBUNIT B, CHLOROPLASTIC"/>
    <property type="match status" value="1"/>
</dbReference>
<dbReference type="Pfam" id="PF00430">
    <property type="entry name" value="ATP-synt_B"/>
    <property type="match status" value="1"/>
</dbReference>
<organism>
    <name type="scientific">Nymphaea alba</name>
    <name type="common">White water-lily</name>
    <name type="synonym">Castalia alba</name>
    <dbReference type="NCBI Taxonomy" id="34301"/>
    <lineage>
        <taxon>Eukaryota</taxon>
        <taxon>Viridiplantae</taxon>
        <taxon>Streptophyta</taxon>
        <taxon>Embryophyta</taxon>
        <taxon>Tracheophyta</taxon>
        <taxon>Spermatophyta</taxon>
        <taxon>Magnoliopsida</taxon>
        <taxon>Nymphaeales</taxon>
        <taxon>Nymphaeaceae</taxon>
        <taxon>Nymphaea</taxon>
    </lineage>
</organism>
<feature type="chain" id="PRO_0000368957" description="ATP synthase subunit b, chloroplastic">
    <location>
        <begin position="1"/>
        <end position="184"/>
    </location>
</feature>
<feature type="transmembrane region" description="Helical" evidence="1">
    <location>
        <begin position="27"/>
        <end position="49"/>
    </location>
</feature>
<sequence length="184" mass="20710">MKNLTDSFVFLGHWPSAGSFGFNTDILATNLINLSVVLGVLIFFGKGVLSDLLDNRKQRILSTIRNSEELCGGAVEQLEKARARLRKVEREAEEFRVNGYSEIEQEKMNLINAAYQNLEQLENYKNETIHFEQQRAINQVQQRVFQQALQGALGTLNNCLNGELHLRTIGANIGILGAMKEITD</sequence>
<gene>
    <name evidence="1" type="primary">atpF</name>
</gene>
<evidence type="ECO:0000255" key="1">
    <source>
        <dbReference type="HAMAP-Rule" id="MF_01398"/>
    </source>
</evidence>